<keyword id="KW-0413">Isomerase</keyword>
<keyword id="KW-1185">Reference proteome</keyword>
<keyword id="KW-0819">tRNA processing</keyword>
<proteinExistence type="inferred from homology"/>
<feature type="chain" id="PRO_0000121840" description="tRNA pseudouridine synthase B">
    <location>
        <begin position="1"/>
        <end position="292"/>
    </location>
</feature>
<feature type="active site" description="Nucleophile" evidence="1">
    <location>
        <position position="38"/>
    </location>
</feature>
<accession>Q7MBB8</accession>
<comment type="function">
    <text evidence="1">Responsible for synthesis of pseudouridine from uracil-55 in the psi GC loop of transfer RNAs.</text>
</comment>
<comment type="catalytic activity">
    <reaction evidence="1">
        <text>uridine(55) in tRNA = pseudouridine(55) in tRNA</text>
        <dbReference type="Rhea" id="RHEA:42532"/>
        <dbReference type="Rhea" id="RHEA-COMP:10101"/>
        <dbReference type="Rhea" id="RHEA-COMP:10102"/>
        <dbReference type="ChEBI" id="CHEBI:65314"/>
        <dbReference type="ChEBI" id="CHEBI:65315"/>
        <dbReference type="EC" id="5.4.99.25"/>
    </reaction>
</comment>
<comment type="similarity">
    <text evidence="1">Belongs to the pseudouridine synthase TruB family. Type 1 subfamily.</text>
</comment>
<gene>
    <name evidence="1" type="primary">truB</name>
    <name type="ordered locus">gll3690</name>
</gene>
<name>TRUB_GLOVI</name>
<sequence length="292" mass="31197">MEGFLNLDKPAGLTSHDCIARLRRVLGERRIGHGGTLDPAATGVLPVAVGRATRLLRFLSEGKVYRATVRFGLSTDTDDLEGNILADAGAADLDLGRVQVHLQAFRGTISQVPPRYSAIHQEGERLYDLARRGVAIAEIAPRTVEIQALTVLDWYPGHYPELQIEIACSTGTYIRSIARDLGTALGTGATLARLLRTRSGPFALEASLPLAAVEAGFQAGTVPLIGPRTALAHLAAVHLEPPLAARWLMGQRVPGDCEGAFAQIWECETDRFLGVAACEAGSLQPLVVLPTL</sequence>
<organism>
    <name type="scientific">Gloeobacter violaceus (strain ATCC 29082 / PCC 7421)</name>
    <dbReference type="NCBI Taxonomy" id="251221"/>
    <lineage>
        <taxon>Bacteria</taxon>
        <taxon>Bacillati</taxon>
        <taxon>Cyanobacteriota</taxon>
        <taxon>Cyanophyceae</taxon>
        <taxon>Gloeobacterales</taxon>
        <taxon>Gloeobacteraceae</taxon>
        <taxon>Gloeobacter</taxon>
    </lineage>
</organism>
<evidence type="ECO:0000255" key="1">
    <source>
        <dbReference type="HAMAP-Rule" id="MF_01080"/>
    </source>
</evidence>
<dbReference type="EC" id="5.4.99.25" evidence="1"/>
<dbReference type="EMBL" id="BA000045">
    <property type="protein sequence ID" value="BAC91631.1"/>
    <property type="molecule type" value="Genomic_DNA"/>
</dbReference>
<dbReference type="RefSeq" id="NP_926636.1">
    <property type="nucleotide sequence ID" value="NC_005125.1"/>
</dbReference>
<dbReference type="RefSeq" id="WP_011143679.1">
    <property type="nucleotide sequence ID" value="NC_005125.1"/>
</dbReference>
<dbReference type="SMR" id="Q7MBB8"/>
<dbReference type="FunCoup" id="Q7MBB8">
    <property type="interactions" value="175"/>
</dbReference>
<dbReference type="STRING" id="251221.gene:10761205"/>
<dbReference type="EnsemblBacteria" id="BAC91631">
    <property type="protein sequence ID" value="BAC91631"/>
    <property type="gene ID" value="BAC91631"/>
</dbReference>
<dbReference type="KEGG" id="gvi:gll3690"/>
<dbReference type="PATRIC" id="fig|251221.4.peg.3724"/>
<dbReference type="eggNOG" id="COG0130">
    <property type="taxonomic scope" value="Bacteria"/>
</dbReference>
<dbReference type="HOGENOM" id="CLU_032087_0_0_3"/>
<dbReference type="InParanoid" id="Q7MBB8"/>
<dbReference type="OrthoDB" id="9802309at2"/>
<dbReference type="PhylomeDB" id="Q7MBB8"/>
<dbReference type="Proteomes" id="UP000000557">
    <property type="component" value="Chromosome"/>
</dbReference>
<dbReference type="GO" id="GO:0009982">
    <property type="term" value="F:pseudouridine synthase activity"/>
    <property type="evidence" value="ECO:0000318"/>
    <property type="project" value="GO_Central"/>
</dbReference>
<dbReference type="GO" id="GO:0003723">
    <property type="term" value="F:RNA binding"/>
    <property type="evidence" value="ECO:0007669"/>
    <property type="project" value="InterPro"/>
</dbReference>
<dbReference type="GO" id="GO:0160148">
    <property type="term" value="F:tRNA pseudouridine(55) synthase activity"/>
    <property type="evidence" value="ECO:0007669"/>
    <property type="project" value="UniProtKB-EC"/>
</dbReference>
<dbReference type="GO" id="GO:1990481">
    <property type="term" value="P:mRNA pseudouridine synthesis"/>
    <property type="evidence" value="ECO:0000318"/>
    <property type="project" value="GO_Central"/>
</dbReference>
<dbReference type="GO" id="GO:0006400">
    <property type="term" value="P:tRNA modification"/>
    <property type="evidence" value="ECO:0000318"/>
    <property type="project" value="GO_Central"/>
</dbReference>
<dbReference type="GO" id="GO:0031119">
    <property type="term" value="P:tRNA pseudouridine synthesis"/>
    <property type="evidence" value="ECO:0007669"/>
    <property type="project" value="UniProtKB-UniRule"/>
</dbReference>
<dbReference type="CDD" id="cd02573">
    <property type="entry name" value="PseudoU_synth_EcTruB"/>
    <property type="match status" value="1"/>
</dbReference>
<dbReference type="Gene3D" id="3.30.2350.10">
    <property type="entry name" value="Pseudouridine synthase"/>
    <property type="match status" value="1"/>
</dbReference>
<dbReference type="HAMAP" id="MF_01080">
    <property type="entry name" value="TruB_bact"/>
    <property type="match status" value="1"/>
</dbReference>
<dbReference type="InterPro" id="IPR020103">
    <property type="entry name" value="PsdUridine_synth_cat_dom_sf"/>
</dbReference>
<dbReference type="InterPro" id="IPR002501">
    <property type="entry name" value="PsdUridine_synth_N"/>
</dbReference>
<dbReference type="InterPro" id="IPR014780">
    <property type="entry name" value="tRNA_psdUridine_synth_TruB"/>
</dbReference>
<dbReference type="InterPro" id="IPR015240">
    <property type="entry name" value="tRNA_sdUridine_synth_fam1_C"/>
</dbReference>
<dbReference type="InterPro" id="IPR032819">
    <property type="entry name" value="TruB_C"/>
</dbReference>
<dbReference type="NCBIfam" id="TIGR00431">
    <property type="entry name" value="TruB"/>
    <property type="match status" value="1"/>
</dbReference>
<dbReference type="PANTHER" id="PTHR13767:SF2">
    <property type="entry name" value="PSEUDOURIDYLATE SYNTHASE TRUB1"/>
    <property type="match status" value="1"/>
</dbReference>
<dbReference type="PANTHER" id="PTHR13767">
    <property type="entry name" value="TRNA-PSEUDOURIDINE SYNTHASE"/>
    <property type="match status" value="1"/>
</dbReference>
<dbReference type="Pfam" id="PF09157">
    <property type="entry name" value="TruB-C_2"/>
    <property type="match status" value="1"/>
</dbReference>
<dbReference type="Pfam" id="PF16198">
    <property type="entry name" value="TruB_C_2"/>
    <property type="match status" value="1"/>
</dbReference>
<dbReference type="Pfam" id="PF01509">
    <property type="entry name" value="TruB_N"/>
    <property type="match status" value="1"/>
</dbReference>
<dbReference type="SUPFAM" id="SSF55120">
    <property type="entry name" value="Pseudouridine synthase"/>
    <property type="match status" value="1"/>
</dbReference>
<reference key="1">
    <citation type="journal article" date="2003" name="DNA Res.">
        <title>Complete genome structure of Gloeobacter violaceus PCC 7421, a cyanobacterium that lacks thylakoids.</title>
        <authorList>
            <person name="Nakamura Y."/>
            <person name="Kaneko T."/>
            <person name="Sato S."/>
            <person name="Mimuro M."/>
            <person name="Miyashita H."/>
            <person name="Tsuchiya T."/>
            <person name="Sasamoto S."/>
            <person name="Watanabe A."/>
            <person name="Kawashima K."/>
            <person name="Kishida Y."/>
            <person name="Kiyokawa C."/>
            <person name="Kohara M."/>
            <person name="Matsumoto M."/>
            <person name="Matsuno A."/>
            <person name="Nakazaki N."/>
            <person name="Shimpo S."/>
            <person name="Takeuchi C."/>
            <person name="Yamada M."/>
            <person name="Tabata S."/>
        </authorList>
    </citation>
    <scope>NUCLEOTIDE SEQUENCE [LARGE SCALE GENOMIC DNA]</scope>
    <source>
        <strain>ATCC 29082 / PCC 7421</strain>
    </source>
</reference>
<protein>
    <recommendedName>
        <fullName evidence="1">tRNA pseudouridine synthase B</fullName>
        <ecNumber evidence="1">5.4.99.25</ecNumber>
    </recommendedName>
    <alternativeName>
        <fullName evidence="1">tRNA pseudouridine(55) synthase</fullName>
        <shortName evidence="1">Psi55 synthase</shortName>
    </alternativeName>
    <alternativeName>
        <fullName evidence="1">tRNA pseudouridylate synthase</fullName>
    </alternativeName>
    <alternativeName>
        <fullName evidence="1">tRNA-uridine isomerase</fullName>
    </alternativeName>
</protein>